<dbReference type="EMBL" id="AAFI02000070">
    <property type="protein sequence ID" value="EAL65134.1"/>
    <property type="molecule type" value="Genomic_DNA"/>
</dbReference>
<dbReference type="RefSeq" id="XP_638470.1">
    <property type="nucleotide sequence ID" value="XM_633378.1"/>
</dbReference>
<dbReference type="SMR" id="Q54PA5"/>
<dbReference type="FunCoup" id="Q54PA5">
    <property type="interactions" value="19"/>
</dbReference>
<dbReference type="STRING" id="44689.Q54PA5"/>
<dbReference type="GlyCosmos" id="Q54PA5">
    <property type="glycosylation" value="5 sites, No reported glycans"/>
</dbReference>
<dbReference type="GlyGen" id="Q54PA5">
    <property type="glycosylation" value="5 sites"/>
</dbReference>
<dbReference type="PaxDb" id="44689-DDB0231861"/>
<dbReference type="EnsemblProtists" id="EAL65134">
    <property type="protein sequence ID" value="EAL65134"/>
    <property type="gene ID" value="DDB_G0284729"/>
</dbReference>
<dbReference type="GeneID" id="8624721"/>
<dbReference type="KEGG" id="ddi:DDB_G0284729"/>
<dbReference type="dictyBase" id="DDB_G0284729">
    <property type="gene designation" value="fslK"/>
</dbReference>
<dbReference type="VEuPathDB" id="AmoebaDB:DDB_G0284729"/>
<dbReference type="eggNOG" id="ENOG502R9ZP">
    <property type="taxonomic scope" value="Eukaryota"/>
</dbReference>
<dbReference type="HOGENOM" id="CLU_030318_0_0_1"/>
<dbReference type="InParanoid" id="Q54PA5"/>
<dbReference type="OMA" id="THITIMS"/>
<dbReference type="PhylomeDB" id="Q54PA5"/>
<dbReference type="PRO" id="PR:Q54PA5"/>
<dbReference type="Proteomes" id="UP000002195">
    <property type="component" value="Chromosome 4"/>
</dbReference>
<dbReference type="GO" id="GO:0016020">
    <property type="term" value="C:membrane"/>
    <property type="evidence" value="ECO:0007669"/>
    <property type="project" value="UniProtKB-SubCell"/>
</dbReference>
<dbReference type="CDD" id="cd07066">
    <property type="entry name" value="CRD_FZ"/>
    <property type="match status" value="1"/>
</dbReference>
<dbReference type="Gene3D" id="1.20.1070.10">
    <property type="entry name" value="Rhodopsin 7-helix transmembrane proteins"/>
    <property type="match status" value="1"/>
</dbReference>
<dbReference type="InterPro" id="IPR050949">
    <property type="entry name" value="GPCR_Fz/Smo-like"/>
</dbReference>
<dbReference type="PANTHER" id="PTHR31787:SF12">
    <property type="entry name" value="FRIZZLED AND SMOOTHENED-LIKE PROTEIN K"/>
    <property type="match status" value="1"/>
</dbReference>
<dbReference type="PANTHER" id="PTHR31787">
    <property type="entry name" value="G-PROTEIN-COUPLED RECEPTOR GPCR FAMILY PROTEIN"/>
    <property type="match status" value="1"/>
</dbReference>
<comment type="subcellular location">
    <subcellularLocation>
        <location evidence="5">Membrane</location>
        <topology evidence="5">Multi-pass membrane protein</topology>
    </subcellularLocation>
</comment>
<comment type="induction">
    <text evidence="4">Down-regulated by phagocytic stimuli.</text>
</comment>
<comment type="domain">
    <text evidence="1">Lys-Thr-X-X-X-Trp motif interacts with the PDZ domain of Dvl (Disheveled) family members and is involved in the activation of the Wnt/beta-catenin signaling pathway.</text>
</comment>
<comment type="similarity">
    <text evidence="5">Belongs to the G-protein coupled receptor Fz/Smo family.</text>
</comment>
<proteinExistence type="evidence at transcript level"/>
<evidence type="ECO:0000250" key="1"/>
<evidence type="ECO:0000255" key="2"/>
<evidence type="ECO:0000256" key="3">
    <source>
        <dbReference type="SAM" id="MobiDB-lite"/>
    </source>
</evidence>
<evidence type="ECO:0000269" key="4">
    <source>
    </source>
</evidence>
<evidence type="ECO:0000305" key="5"/>
<reference key="1">
    <citation type="journal article" date="2005" name="Nature">
        <title>The genome of the social amoeba Dictyostelium discoideum.</title>
        <authorList>
            <person name="Eichinger L."/>
            <person name="Pachebat J.A."/>
            <person name="Gloeckner G."/>
            <person name="Rajandream M.A."/>
            <person name="Sucgang R."/>
            <person name="Berriman M."/>
            <person name="Song J."/>
            <person name="Olsen R."/>
            <person name="Szafranski K."/>
            <person name="Xu Q."/>
            <person name="Tunggal B."/>
            <person name="Kummerfeld S."/>
            <person name="Madera M."/>
            <person name="Konfortov B.A."/>
            <person name="Rivero F."/>
            <person name="Bankier A.T."/>
            <person name="Lehmann R."/>
            <person name="Hamlin N."/>
            <person name="Davies R."/>
            <person name="Gaudet P."/>
            <person name="Fey P."/>
            <person name="Pilcher K."/>
            <person name="Chen G."/>
            <person name="Saunders D."/>
            <person name="Sodergren E.J."/>
            <person name="Davis P."/>
            <person name="Kerhornou A."/>
            <person name="Nie X."/>
            <person name="Hall N."/>
            <person name="Anjard C."/>
            <person name="Hemphill L."/>
            <person name="Bason N."/>
            <person name="Farbrother P."/>
            <person name="Desany B."/>
            <person name="Just E."/>
            <person name="Morio T."/>
            <person name="Rost R."/>
            <person name="Churcher C.M."/>
            <person name="Cooper J."/>
            <person name="Haydock S."/>
            <person name="van Driessche N."/>
            <person name="Cronin A."/>
            <person name="Goodhead I."/>
            <person name="Muzny D.M."/>
            <person name="Mourier T."/>
            <person name="Pain A."/>
            <person name="Lu M."/>
            <person name="Harper D."/>
            <person name="Lindsay R."/>
            <person name="Hauser H."/>
            <person name="James K.D."/>
            <person name="Quiles M."/>
            <person name="Madan Babu M."/>
            <person name="Saito T."/>
            <person name="Buchrieser C."/>
            <person name="Wardroper A."/>
            <person name="Felder M."/>
            <person name="Thangavelu M."/>
            <person name="Johnson D."/>
            <person name="Knights A."/>
            <person name="Loulseged H."/>
            <person name="Mungall K.L."/>
            <person name="Oliver K."/>
            <person name="Price C."/>
            <person name="Quail M.A."/>
            <person name="Urushihara H."/>
            <person name="Hernandez J."/>
            <person name="Rabbinowitsch E."/>
            <person name="Steffen D."/>
            <person name="Sanders M."/>
            <person name="Ma J."/>
            <person name="Kohara Y."/>
            <person name="Sharp S."/>
            <person name="Simmonds M.N."/>
            <person name="Spiegler S."/>
            <person name="Tivey A."/>
            <person name="Sugano S."/>
            <person name="White B."/>
            <person name="Walker D."/>
            <person name="Woodward J.R."/>
            <person name="Winckler T."/>
            <person name="Tanaka Y."/>
            <person name="Shaulsky G."/>
            <person name="Schleicher M."/>
            <person name="Weinstock G.M."/>
            <person name="Rosenthal A."/>
            <person name="Cox E.C."/>
            <person name="Chisholm R.L."/>
            <person name="Gibbs R.A."/>
            <person name="Loomis W.F."/>
            <person name="Platzer M."/>
            <person name="Kay R.R."/>
            <person name="Williams J.G."/>
            <person name="Dear P.H."/>
            <person name="Noegel A.A."/>
            <person name="Barrell B.G."/>
            <person name="Kuspa A."/>
        </authorList>
    </citation>
    <scope>NUCLEOTIDE SEQUENCE [LARGE SCALE GENOMIC DNA]</scope>
    <source>
        <strain>AX4</strain>
    </source>
</reference>
<reference key="2">
    <citation type="journal article" date="2006" name="Eur. J. Cell Biol.">
        <title>The Dictyostelium repertoire of seven transmembrane domain receptors.</title>
        <authorList>
            <person name="Prabhu Y."/>
            <person name="Eichinger L."/>
        </authorList>
    </citation>
    <scope>NOMENCLATURE</scope>
</reference>
<reference key="3">
    <citation type="journal article" date="2008" name="BMC Genomics">
        <title>Genome-wide transcriptional changes induced by phagocytosis or growth on bacteria in Dictyostelium.</title>
        <authorList>
            <person name="Sillo A."/>
            <person name="Bloomfield G."/>
            <person name="Balest A."/>
            <person name="Balbo A."/>
            <person name="Pergolizzi B."/>
            <person name="Peracino B."/>
            <person name="Skelton J."/>
            <person name="Ivens A."/>
            <person name="Bozzaro S."/>
        </authorList>
    </citation>
    <scope>INDUCTION [LARGE SCALE ANALYSIS]</scope>
</reference>
<protein>
    <recommendedName>
        <fullName>Frizzled and smoothened-like protein K</fullName>
    </recommendedName>
</protein>
<keyword id="KW-0325">Glycoprotein</keyword>
<keyword id="KW-0472">Membrane</keyword>
<keyword id="KW-0675">Receptor</keyword>
<keyword id="KW-1185">Reference proteome</keyword>
<keyword id="KW-0732">Signal</keyword>
<keyword id="KW-0812">Transmembrane</keyword>
<keyword id="KW-1133">Transmembrane helix</keyword>
<sequence length="580" mass="65458">MRVLFILFLFYFYTYTEAQQYYPIDPTGKCEQYIGDSVITPCNSIYVSSTANQSTAMLSLNLYFSLLGGSSASCQNAYTFATLCSTYLPECEIFIDNSTNKEIAMPKRVCLDTCNSVSKNCQITSYFDCNQLEPISKLPLFPKESSDYNLTTYGGELNYRLDCYDPPKSNETTVIGYCPFPLVFRNRTIVGKGSDSLDNSENYGYTYVSEDSYCTIPCPAPIFSEKQWDNIFDTSDAISLVSLLCSVYLFITYMVINPKRNKYDYFFSFFVLSIILMSIAGTIGFSVGGTRKLLCPEINRRGVYTDPAVAAAGWIFQFAIINAILWFSINSFELWFQIKFIKRKLHLIKFYILAVLVISIALSVPLSAIGEFNAGLGNFVVWIESGKYQNWFFWGPLGIVLTVGTTFIGLVIWEIYKIVSSTNKSDFFKLQLKPLMNMLLIYLTFVYLFGYNFYIHNSLNGFYGSSEEFKNCIISTDGKDCRIQGPPYSSILMFVFCLRIYGVYCIALYGFSPKTRSIWSNSIVFNNSMANKLKTLYISSGTTKGGTSSTDIKMSTNNNSNMDSGGGKSSSMEPDEIILR</sequence>
<accession>Q54PA5</accession>
<feature type="signal peptide" evidence="2">
    <location>
        <begin position="1"/>
        <end position="18"/>
    </location>
</feature>
<feature type="chain" id="PRO_0000371372" description="Frizzled and smoothened-like protein K">
    <location>
        <begin position="19"/>
        <end position="580"/>
    </location>
</feature>
<feature type="topological domain" description="Extracellular" evidence="2">
    <location>
        <begin position="19"/>
        <end position="236"/>
    </location>
</feature>
<feature type="transmembrane region" description="Helical; Name=1" evidence="2">
    <location>
        <begin position="237"/>
        <end position="257"/>
    </location>
</feature>
<feature type="topological domain" description="Cytoplasmic" evidence="2">
    <location>
        <begin position="258"/>
        <end position="264"/>
    </location>
</feature>
<feature type="transmembrane region" description="Helical; Name=2" evidence="2">
    <location>
        <begin position="265"/>
        <end position="285"/>
    </location>
</feature>
<feature type="topological domain" description="Extracellular" evidence="2">
    <location>
        <begin position="286"/>
        <end position="308"/>
    </location>
</feature>
<feature type="transmembrane region" description="Helical; Name=3" evidence="2">
    <location>
        <begin position="309"/>
        <end position="329"/>
    </location>
</feature>
<feature type="topological domain" description="Cytoplasmic" evidence="2">
    <location>
        <begin position="330"/>
        <end position="349"/>
    </location>
</feature>
<feature type="transmembrane region" description="Helical; Name=4" evidence="2">
    <location>
        <begin position="350"/>
        <end position="370"/>
    </location>
</feature>
<feature type="topological domain" description="Extracellular" evidence="2">
    <location>
        <begin position="371"/>
        <end position="391"/>
    </location>
</feature>
<feature type="transmembrane region" description="Helical; Name=5" evidence="2">
    <location>
        <begin position="392"/>
        <end position="412"/>
    </location>
</feature>
<feature type="topological domain" description="Cytoplasmic" evidence="2">
    <location>
        <begin position="413"/>
        <end position="434"/>
    </location>
</feature>
<feature type="transmembrane region" description="Helical; Name=6" evidence="2">
    <location>
        <begin position="435"/>
        <end position="455"/>
    </location>
</feature>
<feature type="topological domain" description="Extracellular" evidence="2">
    <location>
        <begin position="456"/>
        <end position="490"/>
    </location>
</feature>
<feature type="transmembrane region" description="Helical; Name=7" evidence="2">
    <location>
        <begin position="491"/>
        <end position="511"/>
    </location>
</feature>
<feature type="topological domain" description="Cytoplasmic" evidence="2">
    <location>
        <begin position="512"/>
        <end position="580"/>
    </location>
</feature>
<feature type="domain" description="FZ">
    <location>
        <begin position="25"/>
        <end position="154"/>
    </location>
</feature>
<feature type="region of interest" description="Disordered" evidence="3">
    <location>
        <begin position="542"/>
        <end position="580"/>
    </location>
</feature>
<feature type="short sequence motif" description="Lys-Thr-X-X-X-Trp motif, mediates interaction with the PDZ domain of Dvl family members" evidence="1">
    <location>
        <begin position="514"/>
        <end position="519"/>
    </location>
</feature>
<feature type="compositionally biased region" description="Polar residues" evidence="3">
    <location>
        <begin position="551"/>
        <end position="563"/>
    </location>
</feature>
<feature type="glycosylation site" description="N-linked (GlcNAc...) asparagine" evidence="2">
    <location>
        <position position="52"/>
    </location>
</feature>
<feature type="glycosylation site" description="N-linked (GlcNAc...) asparagine" evidence="2">
    <location>
        <position position="97"/>
    </location>
</feature>
<feature type="glycosylation site" description="N-linked (GlcNAc...) asparagine" evidence="2">
    <location>
        <position position="149"/>
    </location>
</feature>
<feature type="glycosylation site" description="N-linked (GlcNAc...) asparagine" evidence="2">
    <location>
        <position position="170"/>
    </location>
</feature>
<feature type="glycosylation site" description="N-linked (GlcNAc...) asparagine" evidence="2">
    <location>
        <position position="186"/>
    </location>
</feature>
<organism>
    <name type="scientific">Dictyostelium discoideum</name>
    <name type="common">Social amoeba</name>
    <dbReference type="NCBI Taxonomy" id="44689"/>
    <lineage>
        <taxon>Eukaryota</taxon>
        <taxon>Amoebozoa</taxon>
        <taxon>Evosea</taxon>
        <taxon>Eumycetozoa</taxon>
        <taxon>Dictyostelia</taxon>
        <taxon>Dictyosteliales</taxon>
        <taxon>Dictyosteliaceae</taxon>
        <taxon>Dictyostelium</taxon>
    </lineage>
</organism>
<name>FSLK_DICDI</name>
<gene>
    <name type="primary">fslK</name>
    <name type="ORF">DDB_G0284729</name>
</gene>